<dbReference type="EMBL" id="AY973544">
    <property type="protein sequence ID" value="AAX84045.1"/>
    <property type="status" value="ALT_FRAME"/>
    <property type="molecule type" value="mRNA"/>
</dbReference>
<dbReference type="EMBL" id="AY973545">
    <property type="protein sequence ID" value="AAX84046.1"/>
    <property type="molecule type" value="mRNA"/>
</dbReference>
<dbReference type="EMBL" id="AY973546">
    <property type="protein sequence ID" value="AAX84047.1"/>
    <property type="molecule type" value="mRNA"/>
</dbReference>
<dbReference type="EMBL" id="AE013599">
    <property type="protein sequence ID" value="AAF58795.2"/>
    <property type="molecule type" value="Genomic_DNA"/>
</dbReference>
<dbReference type="EMBL" id="AE013599">
    <property type="protein sequence ID" value="AAM68758.1"/>
    <property type="molecule type" value="Genomic_DNA"/>
</dbReference>
<dbReference type="EMBL" id="AE013599">
    <property type="protein sequence ID" value="ABC66064.1"/>
    <property type="molecule type" value="Genomic_DNA"/>
</dbReference>
<dbReference type="EMBL" id="BT011464">
    <property type="protein sequence ID" value="AAR99122.1"/>
    <property type="status" value="ALT_FRAME"/>
    <property type="molecule type" value="mRNA"/>
</dbReference>
<dbReference type="EMBL" id="BT030999">
    <property type="protein sequence ID" value="ABV82381.1"/>
    <property type="status" value="ALT_SEQ"/>
    <property type="molecule type" value="mRNA"/>
</dbReference>
<dbReference type="EMBL" id="AY052091">
    <property type="protein sequence ID" value="AAK93515.1"/>
    <property type="status" value="ALT_SEQ"/>
    <property type="molecule type" value="mRNA"/>
</dbReference>
<dbReference type="EMBL" id="AY069048">
    <property type="protein sequence ID" value="AAL39193.1"/>
    <property type="status" value="ALT_INIT"/>
    <property type="molecule type" value="mRNA"/>
</dbReference>
<dbReference type="RefSeq" id="NP_001033938.1">
    <molecule id="Q4Z8K6-1"/>
    <property type="nucleotide sequence ID" value="NM_001038849.2"/>
</dbReference>
<dbReference type="RefSeq" id="NP_610585.2">
    <molecule id="Q4Z8K6-3"/>
    <property type="nucleotide sequence ID" value="NM_136741.3"/>
</dbReference>
<dbReference type="RefSeq" id="NP_724932.1">
    <molecule id="Q4Z8K6-2"/>
    <property type="nucleotide sequence ID" value="NM_165770.3"/>
</dbReference>
<dbReference type="SMR" id="Q4Z8K6"/>
<dbReference type="BioGRID" id="61920">
    <property type="interactions" value="21"/>
</dbReference>
<dbReference type="FunCoup" id="Q4Z8K6">
    <property type="interactions" value="1502"/>
</dbReference>
<dbReference type="IntAct" id="Q4Z8K6">
    <property type="interactions" value="16"/>
</dbReference>
<dbReference type="STRING" id="7227.FBpp0312425"/>
<dbReference type="GlyGen" id="Q4Z8K6">
    <property type="glycosylation" value="2 sites"/>
</dbReference>
<dbReference type="iPTMnet" id="Q4Z8K6"/>
<dbReference type="PaxDb" id="7227-FBpp0099887"/>
<dbReference type="EnsemblMetazoa" id="FBtr0088262">
    <molecule id="Q4Z8K6-3"/>
    <property type="protein sequence ID" value="FBpp0087357"/>
    <property type="gene ID" value="FBgn0262114"/>
</dbReference>
<dbReference type="EnsemblMetazoa" id="FBtr0088263">
    <molecule id="Q4Z8K6-2"/>
    <property type="protein sequence ID" value="FBpp0087358"/>
    <property type="gene ID" value="FBgn0262114"/>
</dbReference>
<dbReference type="EnsemblMetazoa" id="FBtr0100460">
    <molecule id="Q4Z8K6-1"/>
    <property type="protein sequence ID" value="FBpp0099887"/>
    <property type="gene ID" value="FBgn0262114"/>
</dbReference>
<dbReference type="GeneID" id="36102"/>
<dbReference type="KEGG" id="dme:Dmel_CG42236"/>
<dbReference type="AGR" id="FB:FBgn0262114"/>
<dbReference type="CTD" id="36102"/>
<dbReference type="FlyBase" id="FBgn0262114">
    <property type="gene designation" value="RanBPM"/>
</dbReference>
<dbReference type="VEuPathDB" id="VectorBase:FBgn0262114"/>
<dbReference type="eggNOG" id="KOG1477">
    <property type="taxonomic scope" value="Eukaryota"/>
</dbReference>
<dbReference type="GeneTree" id="ENSGT00940000174485"/>
<dbReference type="HOGENOM" id="CLU_009129_1_0_1"/>
<dbReference type="InParanoid" id="Q4Z8K6"/>
<dbReference type="OMA" id="FNAYTHQ"/>
<dbReference type="OrthoDB" id="25503at2759"/>
<dbReference type="PhylomeDB" id="Q4Z8K6"/>
<dbReference type="Reactome" id="R-DME-9861718">
    <property type="pathway name" value="Regulation of pyruvate metabolism"/>
</dbReference>
<dbReference type="SignaLink" id="Q4Z8K6"/>
<dbReference type="BioGRID-ORCS" id="36102">
    <property type="hits" value="0 hits in 3 CRISPR screens"/>
</dbReference>
<dbReference type="CD-CODE" id="E7B423DE">
    <property type="entry name" value="Mimi granules"/>
</dbReference>
<dbReference type="GenomeRNAi" id="36102"/>
<dbReference type="PRO" id="PR:Q4Z8K6"/>
<dbReference type="Proteomes" id="UP000000803">
    <property type="component" value="Chromosome 2R"/>
</dbReference>
<dbReference type="Bgee" id="FBgn0262114">
    <property type="expression patterns" value="Expressed in embryonic/larval hemocyte (Drosophila) and 243 other cell types or tissues"/>
</dbReference>
<dbReference type="ExpressionAtlas" id="Q4Z8K6">
    <property type="expression patterns" value="baseline and differential"/>
</dbReference>
<dbReference type="GO" id="GO:0005737">
    <property type="term" value="C:cytoplasm"/>
    <property type="evidence" value="ECO:0000314"/>
    <property type="project" value="UniProtKB"/>
</dbReference>
<dbReference type="GO" id="GO:0034657">
    <property type="term" value="C:GID complex"/>
    <property type="evidence" value="ECO:0000314"/>
    <property type="project" value="FlyBase"/>
</dbReference>
<dbReference type="GO" id="GO:0016020">
    <property type="term" value="C:membrane"/>
    <property type="evidence" value="ECO:0000314"/>
    <property type="project" value="UniProtKB"/>
</dbReference>
<dbReference type="GO" id="GO:0005634">
    <property type="term" value="C:nucleus"/>
    <property type="evidence" value="ECO:0000314"/>
    <property type="project" value="UniProtKB"/>
</dbReference>
<dbReference type="GO" id="GO:0031267">
    <property type="term" value="F:small GTPase binding"/>
    <property type="evidence" value="ECO:0000250"/>
    <property type="project" value="FlyBase"/>
</dbReference>
<dbReference type="GO" id="GO:0007010">
    <property type="term" value="P:cytoskeleton organization"/>
    <property type="evidence" value="ECO:0000314"/>
    <property type="project" value="FlyBase"/>
</dbReference>
<dbReference type="GO" id="GO:0046843">
    <property type="term" value="P:dorsal appendage formation"/>
    <property type="evidence" value="ECO:0000315"/>
    <property type="project" value="FlyBase"/>
</dbReference>
<dbReference type="GO" id="GO:0007299">
    <property type="term" value="P:follicle cell of egg chamber-cell adhesion"/>
    <property type="evidence" value="ECO:0000315"/>
    <property type="project" value="FlyBase"/>
</dbReference>
<dbReference type="GO" id="GO:0060250">
    <property type="term" value="P:germ-line stem-cell niche homeostasis"/>
    <property type="evidence" value="ECO:0000315"/>
    <property type="project" value="UniProtKB"/>
</dbReference>
<dbReference type="GO" id="GO:0030536">
    <property type="term" value="P:larval feeding behavior"/>
    <property type="evidence" value="ECO:0000315"/>
    <property type="project" value="FlyBase"/>
</dbReference>
<dbReference type="GO" id="GO:0007162">
    <property type="term" value="P:negative regulation of cell adhesion"/>
    <property type="evidence" value="ECO:0000315"/>
    <property type="project" value="UniProtKB"/>
</dbReference>
<dbReference type="GO" id="GO:0032436">
    <property type="term" value="P:positive regulation of proteasomal ubiquitin-dependent protein catabolic process"/>
    <property type="evidence" value="ECO:0000315"/>
    <property type="project" value="FlyBase"/>
</dbReference>
<dbReference type="GO" id="GO:0046827">
    <property type="term" value="P:positive regulation of protein export from nucleus"/>
    <property type="evidence" value="ECO:0000315"/>
    <property type="project" value="UniProtKB"/>
</dbReference>
<dbReference type="CDD" id="cd12909">
    <property type="entry name" value="SPRY_RanBP9_10"/>
    <property type="match status" value="1"/>
</dbReference>
<dbReference type="FunFam" id="2.60.120.920:FF:000011">
    <property type="entry name" value="RAN binding protein 10"/>
    <property type="match status" value="1"/>
</dbReference>
<dbReference type="Gene3D" id="2.60.120.920">
    <property type="match status" value="1"/>
</dbReference>
<dbReference type="InterPro" id="IPR001870">
    <property type="entry name" value="B30.2/SPRY"/>
</dbReference>
<dbReference type="InterPro" id="IPR043136">
    <property type="entry name" value="B30.2/SPRY_sf"/>
</dbReference>
<dbReference type="InterPro" id="IPR013320">
    <property type="entry name" value="ConA-like_dom_sf"/>
</dbReference>
<dbReference type="InterPro" id="IPR013144">
    <property type="entry name" value="CRA_dom"/>
</dbReference>
<dbReference type="InterPro" id="IPR024964">
    <property type="entry name" value="CTLH/CRA"/>
</dbReference>
<dbReference type="InterPro" id="IPR006595">
    <property type="entry name" value="CTLH_C"/>
</dbReference>
<dbReference type="InterPro" id="IPR006594">
    <property type="entry name" value="LisH"/>
</dbReference>
<dbReference type="InterPro" id="IPR003877">
    <property type="entry name" value="SPRY_dom"/>
</dbReference>
<dbReference type="InterPro" id="IPR035782">
    <property type="entry name" value="SPRY_RanBP9/10"/>
</dbReference>
<dbReference type="InterPro" id="IPR050618">
    <property type="entry name" value="Ubq-SigPath_Reg"/>
</dbReference>
<dbReference type="PANTHER" id="PTHR12864">
    <property type="entry name" value="RAN BINDING PROTEIN 9-RELATED"/>
    <property type="match status" value="1"/>
</dbReference>
<dbReference type="Pfam" id="PF10607">
    <property type="entry name" value="CTLH"/>
    <property type="match status" value="2"/>
</dbReference>
<dbReference type="Pfam" id="PF00622">
    <property type="entry name" value="SPRY"/>
    <property type="match status" value="1"/>
</dbReference>
<dbReference type="SMART" id="SM00757">
    <property type="entry name" value="CRA"/>
    <property type="match status" value="1"/>
</dbReference>
<dbReference type="SMART" id="SM00668">
    <property type="entry name" value="CTLH"/>
    <property type="match status" value="1"/>
</dbReference>
<dbReference type="SMART" id="SM00449">
    <property type="entry name" value="SPRY"/>
    <property type="match status" value="1"/>
</dbReference>
<dbReference type="SUPFAM" id="SSF49899">
    <property type="entry name" value="Concanavalin A-like lectins/glucanases"/>
    <property type="match status" value="1"/>
</dbReference>
<dbReference type="PROSITE" id="PS50188">
    <property type="entry name" value="B302_SPRY"/>
    <property type="match status" value="1"/>
</dbReference>
<dbReference type="PROSITE" id="PS50897">
    <property type="entry name" value="CTLH"/>
    <property type="match status" value="1"/>
</dbReference>
<dbReference type="PROSITE" id="PS50896">
    <property type="entry name" value="LISH"/>
    <property type="match status" value="1"/>
</dbReference>
<protein>
    <recommendedName>
        <fullName>Ran-binding proteins 9/10 homolog</fullName>
    </recommendedName>
    <alternativeName>
        <fullName>Ran-binding protein M</fullName>
    </alternativeName>
</protein>
<proteinExistence type="evidence at protein level"/>
<gene>
    <name type="primary">RanBPM</name>
    <name type="ORF">CG42236</name>
</gene>
<sequence>MENVEEAPPLSSESNSNSNNSSASSSSHQLSQSGAMGAEIAPSTSRSHSHSPTPSPPVPASSHDQPHPDHPSPPLNASETEARENSPHDHSPTPTFHQTAPPPTTSSTAPQRDEREQQQQQEAPPLQQDQQENSPAQDQELHPLLDQQNQEYPAVHQDQQAEQNQELHHIEGLIRHRESQNPEEHPPQASLENRETLGREDTNQEPDEPQVRDPEIEPEAEPPPPLLLEDLDEQDSGSQDLNEQQPPLIIDANAIAETIDANAVERIDDYEDDDEEVDEEEEVVEDRVDRAGEVASVSGAQRLHSVAVLPRYSSASRAPRSSNNNNNNISNHNNNNNNSNSNSLSRRTRHFYSNNGSHFSNDMFPSHNPRSSTQTSSPRVGGRRHHSTPAASSNSPQHQGVDPLRLLYPNVNESETPLPRCWSPHDKCLSIGLSQNNLRVTYKGVGKQHSDAASVRTAYPIPSSCGLYYFEVRIISKGRNGYMGIGLTAQQFRMNRLPGWDKQSYGYHGDDGNSFSSSGNGQTYGPTFTTGDVIGCCVNFVNNTCFYTKNGVDLGIAFRDLPTKLYPTVGLQTPGEEVDANFGQEPFKFDKIVDMMKEMRSNVLRKIDRYPHLLETPENLMNRLVSTYLVHNAFSKTAEAFNGYTNQTFNEDLASIKTRQKIIKLILTGKMSQAIEHTLRSFPGLLENNKNLWFALKCRQFIEMINGADIENVNNKVTATTQTMPTNQTSVIQSTKTFKHSKSGSGNGNVNINQTQQQNNTAIPAVIKPQGGDRPDIKNMLVDDNSNKCVEHDSNSMDVEMEPCQSHSNGGDSSSNGNASAVRNSLDAIDEEMDVDVSPSSRNCGRVIEKILEFGKELSSMGQQLEKENLMTEEERQMLEDAFSLIAYSNPWSSPLGWLLCPSRRESVSTTLNSAILESLNFERRPPLEYLVAHASELIKVIGQHSLGEDAFITIDDVFPQN</sequence>
<feature type="chain" id="PRO_0000305240" description="Ran-binding proteins 9/10 homolog">
    <location>
        <begin position="1"/>
        <end position="962"/>
    </location>
</feature>
<feature type="domain" description="B30.2/SPRY" evidence="3">
    <location>
        <begin position="400"/>
        <end position="587"/>
    </location>
</feature>
<feature type="domain" description="LisH" evidence="2">
    <location>
        <begin position="617"/>
        <end position="649"/>
    </location>
</feature>
<feature type="domain" description="CTLH" evidence="1">
    <location>
        <begin position="655"/>
        <end position="712"/>
    </location>
</feature>
<feature type="region of interest" description="Disordered" evidence="4">
    <location>
        <begin position="1"/>
        <end position="246"/>
    </location>
</feature>
<feature type="region of interest" description="Disordered" evidence="4">
    <location>
        <begin position="271"/>
        <end position="296"/>
    </location>
</feature>
<feature type="region of interest" description="Disordered" evidence="4">
    <location>
        <begin position="313"/>
        <end position="402"/>
    </location>
</feature>
<feature type="region of interest" description="Disordered" evidence="4">
    <location>
        <begin position="800"/>
        <end position="820"/>
    </location>
</feature>
<feature type="compositionally biased region" description="Low complexity" evidence="4">
    <location>
        <begin position="1"/>
        <end position="33"/>
    </location>
</feature>
<feature type="compositionally biased region" description="Low complexity" evidence="4">
    <location>
        <begin position="41"/>
        <end position="52"/>
    </location>
</feature>
<feature type="compositionally biased region" description="Basic and acidic residues" evidence="4">
    <location>
        <begin position="80"/>
        <end position="91"/>
    </location>
</feature>
<feature type="compositionally biased region" description="Low complexity" evidence="4">
    <location>
        <begin position="118"/>
        <end position="132"/>
    </location>
</feature>
<feature type="compositionally biased region" description="Polar residues" evidence="4">
    <location>
        <begin position="146"/>
        <end position="164"/>
    </location>
</feature>
<feature type="compositionally biased region" description="Basic and acidic residues" evidence="4">
    <location>
        <begin position="165"/>
        <end position="202"/>
    </location>
</feature>
<feature type="compositionally biased region" description="Polar residues" evidence="4">
    <location>
        <begin position="236"/>
        <end position="245"/>
    </location>
</feature>
<feature type="compositionally biased region" description="Acidic residues" evidence="4">
    <location>
        <begin position="271"/>
        <end position="284"/>
    </location>
</feature>
<feature type="compositionally biased region" description="Low complexity" evidence="4">
    <location>
        <begin position="321"/>
        <end position="343"/>
    </location>
</feature>
<feature type="compositionally biased region" description="Polar residues" evidence="4">
    <location>
        <begin position="351"/>
        <end position="360"/>
    </location>
</feature>
<feature type="compositionally biased region" description="Polar residues" evidence="4">
    <location>
        <begin position="368"/>
        <end position="378"/>
    </location>
</feature>
<feature type="compositionally biased region" description="Polar residues" evidence="4">
    <location>
        <begin position="389"/>
        <end position="398"/>
    </location>
</feature>
<feature type="compositionally biased region" description="Low complexity" evidence="4">
    <location>
        <begin position="806"/>
        <end position="820"/>
    </location>
</feature>
<feature type="modified residue" description="Phosphoserine" evidence="6">
    <location>
        <position position="387"/>
    </location>
</feature>
<feature type="modified residue" description="Phosphoserine" evidence="6">
    <location>
        <position position="393"/>
    </location>
</feature>
<feature type="modified residue" description="Phosphoserine" evidence="6">
    <location>
        <position position="395"/>
    </location>
</feature>
<feature type="splice variant" id="VSP_028296" description="In isoform C." evidence="9 10">
    <location>
        <begin position="1"/>
        <end position="362"/>
    </location>
</feature>
<feature type="splice variant" id="VSP_028297" description="In isoform A and isoform C." evidence="8 9 10">
    <location>
        <begin position="834"/>
        <end position="835"/>
    </location>
</feature>
<feature type="sequence conflict" description="In Ref. 5; AAK93515." evidence="11" ref="5">
    <original>V</original>
    <variation>E</variation>
    <location>
        <position position="445"/>
    </location>
</feature>
<name>RBP9X_DROME</name>
<organism>
    <name type="scientific">Drosophila melanogaster</name>
    <name type="common">Fruit fly</name>
    <dbReference type="NCBI Taxonomy" id="7227"/>
    <lineage>
        <taxon>Eukaryota</taxon>
        <taxon>Metazoa</taxon>
        <taxon>Ecdysozoa</taxon>
        <taxon>Arthropoda</taxon>
        <taxon>Hexapoda</taxon>
        <taxon>Insecta</taxon>
        <taxon>Pterygota</taxon>
        <taxon>Neoptera</taxon>
        <taxon>Endopterygota</taxon>
        <taxon>Diptera</taxon>
        <taxon>Brachycera</taxon>
        <taxon>Muscomorpha</taxon>
        <taxon>Ephydroidea</taxon>
        <taxon>Drosophilidae</taxon>
        <taxon>Drosophila</taxon>
        <taxon>Sophophora</taxon>
    </lineage>
</organism>
<keyword id="KW-0025">Alternative splicing</keyword>
<keyword id="KW-0963">Cytoplasm</keyword>
<keyword id="KW-0472">Membrane</keyword>
<keyword id="KW-0539">Nucleus</keyword>
<keyword id="KW-0597">Phosphoprotein</keyword>
<keyword id="KW-1185">Reference proteome</keyword>
<comment type="function">
    <text evidence="5 7">May be involved in JAK/STAT signaling. Isoform D is required for the proper arrangement of niche cells and is autonomously required for proper niche cell size, isoform C negatively regulates the adhesive properties of the niche. The germline stem cell (GSC) niche in ovaries is made up of two somatic cell types: 8-9 cells in a single-filed array make up the terminal filament (TF), and a tight cluster of 5 or 6 cap cells (CpC). Regulating the size and adhesive properties of the CpCs is an important component of the mechanism that controls their capacity to support stem cells, isoform C and isoform D are important factors in mediating this regulation. In contrast, isoform C acts as a positive regulator of cell adhesion in follicle cell epithelium.</text>
</comment>
<comment type="subcellular location">
    <subcellularLocation>
        <location evidence="7">Cytoplasm</location>
    </subcellularLocation>
    <subcellularLocation>
        <location evidence="7">Membrane</location>
    </subcellularLocation>
    <subcellularLocation>
        <location evidence="7">Nucleus</location>
    </subcellularLocation>
    <text>Distribution varies depending on cell type and developmental stage. At late embryogenesis expression is enriched in the nuclei of follicle cells and germline cells and at the nurse cell membranes. In pupal ovaries, expression is seen in niche cells at the cell periphery. In adult ovaries expression is in the nuclei and cytoplasm of the CpCs and TF cells of the niche.</text>
</comment>
<comment type="alternative products">
    <event type="alternative splicing"/>
    <isoform>
        <id>Q4Z8K6-1</id>
        <name>D</name>
        <name>Long RanBPM</name>
        <sequence type="displayed"/>
    </isoform>
    <isoform>
        <id>Q4Z8K6-2</id>
        <name>A</name>
        <sequence type="described" ref="VSP_028297"/>
    </isoform>
    <isoform>
        <id>Q4Z8K6-3</id>
        <name>C</name>
        <name>Short RanBPM</name>
        <sequence type="described" ref="VSP_028296 VSP_028297"/>
    </isoform>
</comment>
<comment type="tissue specificity">
    <text evidence="7">Expressed in the GSCs and in dividing cysts. Expression is reduced in the germline as individual egg chambers are formed. Isoform C is expressed in all somatic and germline cells of the ovary. Isoform D is expressed in the GSC niche.</text>
</comment>
<comment type="disruption phenotype">
    <text evidence="7">Lack of isoform D causes an increase in niche cell size and abnormal terminal filament organization. This in turn increases niche capacity by increasing the potential contact surface between CpCs and stem cells. Lack of isoform C causes defects in the organization of the follicle cell layer and defects in dorsal appendage morphogenesis.</text>
</comment>
<comment type="similarity">
    <text evidence="11">Belongs to the RANBP9/10 family.</text>
</comment>
<comment type="sequence caution" evidence="11">
    <conflict type="miscellaneous discrepancy">
        <sequence resource="EMBL-CDS" id="AAK93515"/>
    </conflict>
    <text>Intron retention.</text>
</comment>
<comment type="sequence caution" evidence="11">
    <conflict type="erroneous initiation">
        <sequence resource="EMBL-CDS" id="AAL39193"/>
    </conflict>
</comment>
<comment type="sequence caution" evidence="11">
    <conflict type="frameshift">
        <sequence resource="EMBL-CDS" id="AAR99122"/>
    </conflict>
</comment>
<comment type="sequence caution" evidence="11">
    <conflict type="frameshift">
        <sequence resource="EMBL-CDS" id="AAX84045"/>
    </conflict>
</comment>
<comment type="sequence caution" evidence="11">
    <conflict type="miscellaneous discrepancy">
        <sequence resource="EMBL-CDS" id="ABV82381"/>
    </conflict>
    <text>Intron retention.</text>
</comment>
<evidence type="ECO:0000255" key="1">
    <source>
        <dbReference type="PROSITE-ProRule" id="PRU00058"/>
    </source>
</evidence>
<evidence type="ECO:0000255" key="2">
    <source>
        <dbReference type="PROSITE-ProRule" id="PRU00126"/>
    </source>
</evidence>
<evidence type="ECO:0000255" key="3">
    <source>
        <dbReference type="PROSITE-ProRule" id="PRU00548"/>
    </source>
</evidence>
<evidence type="ECO:0000256" key="4">
    <source>
        <dbReference type="SAM" id="MobiDB-lite"/>
    </source>
</evidence>
<evidence type="ECO:0000269" key="5">
    <source>
    </source>
</evidence>
<evidence type="ECO:0000269" key="6">
    <source>
    </source>
</evidence>
<evidence type="ECO:0000269" key="7">
    <source>
    </source>
</evidence>
<evidence type="ECO:0000303" key="8">
    <source>
    </source>
</evidence>
<evidence type="ECO:0000303" key="9">
    <source>
    </source>
</evidence>
<evidence type="ECO:0000303" key="10">
    <source ref="4"/>
</evidence>
<evidence type="ECO:0000305" key="11"/>
<reference key="1">
    <citation type="journal article" date="2008" name="J. Cell Biol.">
        <title>RanBPM regulates cell shape, arrangement, and capacity of the female germline stem cell niche in Drosophila melanogaster.</title>
        <authorList>
            <person name="Dansereau D.A."/>
            <person name="Lasko P."/>
        </authorList>
    </citation>
    <scope>NUCLEOTIDE SEQUENCE [MRNA] (ISOFORMS C AND D)</scope>
    <scope>FUNCTION</scope>
    <scope>SUBCELLULAR LOCATION</scope>
    <scope>TISSUE SPECIFICITY</scope>
    <scope>DISRUPTION PHENOTYPE</scope>
    <source>
        <strain>Berkeley</strain>
        <tissue>Embryo</tissue>
        <tissue>Head</tissue>
    </source>
</reference>
<reference key="2">
    <citation type="journal article" date="2000" name="Science">
        <title>The genome sequence of Drosophila melanogaster.</title>
        <authorList>
            <person name="Adams M.D."/>
            <person name="Celniker S.E."/>
            <person name="Holt R.A."/>
            <person name="Evans C.A."/>
            <person name="Gocayne J.D."/>
            <person name="Amanatides P.G."/>
            <person name="Scherer S.E."/>
            <person name="Li P.W."/>
            <person name="Hoskins R.A."/>
            <person name="Galle R.F."/>
            <person name="George R.A."/>
            <person name="Lewis S.E."/>
            <person name="Richards S."/>
            <person name="Ashburner M."/>
            <person name="Henderson S.N."/>
            <person name="Sutton G.G."/>
            <person name="Wortman J.R."/>
            <person name="Yandell M.D."/>
            <person name="Zhang Q."/>
            <person name="Chen L.X."/>
            <person name="Brandon R.C."/>
            <person name="Rogers Y.-H.C."/>
            <person name="Blazej R.G."/>
            <person name="Champe M."/>
            <person name="Pfeiffer B.D."/>
            <person name="Wan K.H."/>
            <person name="Doyle C."/>
            <person name="Baxter E.G."/>
            <person name="Helt G."/>
            <person name="Nelson C.R."/>
            <person name="Miklos G.L.G."/>
            <person name="Abril J.F."/>
            <person name="Agbayani A."/>
            <person name="An H.-J."/>
            <person name="Andrews-Pfannkoch C."/>
            <person name="Baldwin D."/>
            <person name="Ballew R.M."/>
            <person name="Basu A."/>
            <person name="Baxendale J."/>
            <person name="Bayraktaroglu L."/>
            <person name="Beasley E.M."/>
            <person name="Beeson K.Y."/>
            <person name="Benos P.V."/>
            <person name="Berman B.P."/>
            <person name="Bhandari D."/>
            <person name="Bolshakov S."/>
            <person name="Borkova D."/>
            <person name="Botchan M.R."/>
            <person name="Bouck J."/>
            <person name="Brokstein P."/>
            <person name="Brottier P."/>
            <person name="Burtis K.C."/>
            <person name="Busam D.A."/>
            <person name="Butler H."/>
            <person name="Cadieu E."/>
            <person name="Center A."/>
            <person name="Chandra I."/>
            <person name="Cherry J.M."/>
            <person name="Cawley S."/>
            <person name="Dahlke C."/>
            <person name="Davenport L.B."/>
            <person name="Davies P."/>
            <person name="de Pablos B."/>
            <person name="Delcher A."/>
            <person name="Deng Z."/>
            <person name="Mays A.D."/>
            <person name="Dew I."/>
            <person name="Dietz S.M."/>
            <person name="Dodson K."/>
            <person name="Doup L.E."/>
            <person name="Downes M."/>
            <person name="Dugan-Rocha S."/>
            <person name="Dunkov B.C."/>
            <person name="Dunn P."/>
            <person name="Durbin K.J."/>
            <person name="Evangelista C.C."/>
            <person name="Ferraz C."/>
            <person name="Ferriera S."/>
            <person name="Fleischmann W."/>
            <person name="Fosler C."/>
            <person name="Gabrielian A.E."/>
            <person name="Garg N.S."/>
            <person name="Gelbart W.M."/>
            <person name="Glasser K."/>
            <person name="Glodek A."/>
            <person name="Gong F."/>
            <person name="Gorrell J.H."/>
            <person name="Gu Z."/>
            <person name="Guan P."/>
            <person name="Harris M."/>
            <person name="Harris N.L."/>
            <person name="Harvey D.A."/>
            <person name="Heiman T.J."/>
            <person name="Hernandez J.R."/>
            <person name="Houck J."/>
            <person name="Hostin D."/>
            <person name="Houston K.A."/>
            <person name="Howland T.J."/>
            <person name="Wei M.-H."/>
            <person name="Ibegwam C."/>
            <person name="Jalali M."/>
            <person name="Kalush F."/>
            <person name="Karpen G.H."/>
            <person name="Ke Z."/>
            <person name="Kennison J.A."/>
            <person name="Ketchum K.A."/>
            <person name="Kimmel B.E."/>
            <person name="Kodira C.D."/>
            <person name="Kraft C.L."/>
            <person name="Kravitz S."/>
            <person name="Kulp D."/>
            <person name="Lai Z."/>
            <person name="Lasko P."/>
            <person name="Lei Y."/>
            <person name="Levitsky A.A."/>
            <person name="Li J.H."/>
            <person name="Li Z."/>
            <person name="Liang Y."/>
            <person name="Lin X."/>
            <person name="Liu X."/>
            <person name="Mattei B."/>
            <person name="McIntosh T.C."/>
            <person name="McLeod M.P."/>
            <person name="McPherson D."/>
            <person name="Merkulov G."/>
            <person name="Milshina N.V."/>
            <person name="Mobarry C."/>
            <person name="Morris J."/>
            <person name="Moshrefi A."/>
            <person name="Mount S.M."/>
            <person name="Moy M."/>
            <person name="Murphy B."/>
            <person name="Murphy L."/>
            <person name="Muzny D.M."/>
            <person name="Nelson D.L."/>
            <person name="Nelson D.R."/>
            <person name="Nelson K.A."/>
            <person name="Nixon K."/>
            <person name="Nusskern D.R."/>
            <person name="Pacleb J.M."/>
            <person name="Palazzolo M."/>
            <person name="Pittman G.S."/>
            <person name="Pan S."/>
            <person name="Pollard J."/>
            <person name="Puri V."/>
            <person name="Reese M.G."/>
            <person name="Reinert K."/>
            <person name="Remington K."/>
            <person name="Saunders R.D.C."/>
            <person name="Scheeler F."/>
            <person name="Shen H."/>
            <person name="Shue B.C."/>
            <person name="Siden-Kiamos I."/>
            <person name="Simpson M."/>
            <person name="Skupski M.P."/>
            <person name="Smith T.J."/>
            <person name="Spier E."/>
            <person name="Spradling A.C."/>
            <person name="Stapleton M."/>
            <person name="Strong R."/>
            <person name="Sun E."/>
            <person name="Svirskas R."/>
            <person name="Tector C."/>
            <person name="Turner R."/>
            <person name="Venter E."/>
            <person name="Wang A.H."/>
            <person name="Wang X."/>
            <person name="Wang Z.-Y."/>
            <person name="Wassarman D.A."/>
            <person name="Weinstock G.M."/>
            <person name="Weissenbach J."/>
            <person name="Williams S.M."/>
            <person name="Woodage T."/>
            <person name="Worley K.C."/>
            <person name="Wu D."/>
            <person name="Yang S."/>
            <person name="Yao Q.A."/>
            <person name="Ye J."/>
            <person name="Yeh R.-F."/>
            <person name="Zaveri J.S."/>
            <person name="Zhan M."/>
            <person name="Zhang G."/>
            <person name="Zhao Q."/>
            <person name="Zheng L."/>
            <person name="Zheng X.H."/>
            <person name="Zhong F.N."/>
            <person name="Zhong W."/>
            <person name="Zhou X."/>
            <person name="Zhu S.C."/>
            <person name="Zhu X."/>
            <person name="Smith H.O."/>
            <person name="Gibbs R.A."/>
            <person name="Myers E.W."/>
            <person name="Rubin G.M."/>
            <person name="Venter J.C."/>
        </authorList>
    </citation>
    <scope>NUCLEOTIDE SEQUENCE [LARGE SCALE GENOMIC DNA]</scope>
    <source>
        <strain>Berkeley</strain>
    </source>
</reference>
<reference key="3">
    <citation type="journal article" date="2002" name="Genome Biol.">
        <title>Annotation of the Drosophila melanogaster euchromatic genome: a systematic review.</title>
        <authorList>
            <person name="Misra S."/>
            <person name="Crosby M.A."/>
            <person name="Mungall C.J."/>
            <person name="Matthews B.B."/>
            <person name="Campbell K.S."/>
            <person name="Hradecky P."/>
            <person name="Huang Y."/>
            <person name="Kaminker J.S."/>
            <person name="Millburn G.H."/>
            <person name="Prochnik S.E."/>
            <person name="Smith C.D."/>
            <person name="Tupy J.L."/>
            <person name="Whitfield E.J."/>
            <person name="Bayraktaroglu L."/>
            <person name="Berman B.P."/>
            <person name="Bettencourt B.R."/>
            <person name="Celniker S.E."/>
            <person name="de Grey A.D.N.J."/>
            <person name="Drysdale R.A."/>
            <person name="Harris N.L."/>
            <person name="Richter J."/>
            <person name="Russo S."/>
            <person name="Schroeder A.J."/>
            <person name="Shu S.Q."/>
            <person name="Stapleton M."/>
            <person name="Yamada C."/>
            <person name="Ashburner M."/>
            <person name="Gelbart W.M."/>
            <person name="Rubin G.M."/>
            <person name="Lewis S.E."/>
        </authorList>
    </citation>
    <scope>GENOME REANNOTATION</scope>
    <scope>ALTERNATIVE SPLICING</scope>
    <source>
        <strain>Berkeley</strain>
    </source>
</reference>
<reference key="4">
    <citation type="submission" date="2007-10" db="EMBL/GenBank/DDBJ databases">
        <authorList>
            <person name="Stapleton M."/>
            <person name="Carlson J.W."/>
            <person name="Chavez C."/>
            <person name="Frise E."/>
            <person name="George R.A."/>
            <person name="Kapadia B."/>
            <person name="Pacleb J.M."/>
            <person name="Park S."/>
            <person name="Wan K.H."/>
            <person name="Yu C."/>
            <person name="Rubin G.M."/>
            <person name="Celniker S.E."/>
        </authorList>
    </citation>
    <scope>NUCLEOTIDE SEQUENCE [LARGE SCALE MRNA] (ISOFORMS A AND C)</scope>
    <source>
        <strain>Berkeley</strain>
        <tissue>Embryo</tissue>
        <tissue>Larva</tissue>
        <tissue>Pupae</tissue>
    </source>
</reference>
<reference key="5">
    <citation type="journal article" date="2002" name="Genome Biol.">
        <title>A Drosophila full-length cDNA resource.</title>
        <authorList>
            <person name="Stapleton M."/>
            <person name="Carlson J.W."/>
            <person name="Brokstein P."/>
            <person name="Yu C."/>
            <person name="Champe M."/>
            <person name="George R.A."/>
            <person name="Guarin H."/>
            <person name="Kronmiller B."/>
            <person name="Pacleb J.M."/>
            <person name="Park S."/>
            <person name="Wan K.H."/>
            <person name="Rubin G.M."/>
            <person name="Celniker S.E."/>
        </authorList>
    </citation>
    <scope>NUCLEOTIDE SEQUENCE [LARGE SCALE MRNA] OF 1-445 (ISOFORMS A/D)</scope>
    <scope>NUCLEOTIDE SEQUENCE [LARGE SCALE MRNA] OF 766-962 (ISOFORM A)</scope>
    <source>
        <strain>Berkeley</strain>
        <tissue>Embryo</tissue>
        <tissue>Head</tissue>
    </source>
</reference>
<reference key="6">
    <citation type="journal article" date="2005" name="Genes Dev.">
        <title>Genome-wide RNAi analysis of JAK/STAT signaling components in Drosophila.</title>
        <authorList>
            <person name="Baeg G.-H."/>
            <person name="Zhou R."/>
            <person name="Perrimon N."/>
        </authorList>
    </citation>
    <scope>FUNCTION</scope>
</reference>
<reference key="7">
    <citation type="journal article" date="2008" name="J. Proteome Res.">
        <title>Phosphoproteome analysis of Drosophila melanogaster embryos.</title>
        <authorList>
            <person name="Zhai B."/>
            <person name="Villen J."/>
            <person name="Beausoleil S.A."/>
            <person name="Mintseris J."/>
            <person name="Gygi S.P."/>
        </authorList>
    </citation>
    <scope>PHOSPHORYLATION [LARGE SCALE ANALYSIS] AT SER-387; SER-393 AND SER-395</scope>
    <scope>IDENTIFICATION BY MASS SPECTROMETRY</scope>
    <source>
        <tissue>Embryo</tissue>
    </source>
</reference>
<accession>Q4Z8K6</accession>
<accession>A1Z895</accession>
<accession>A1Z896</accession>
<accession>A8E757</accession>
<accession>Q6NN33</accession>
<accession>Q8T0U5</accession>
<accession>Q960F3</accession>